<proteinExistence type="evidence at protein level"/>
<evidence type="ECO:0000250" key="1">
    <source>
        <dbReference type="UniProtKB" id="P10538"/>
    </source>
</evidence>
<evidence type="ECO:0000255" key="2">
    <source>
        <dbReference type="PROSITE-ProRule" id="PRU10050"/>
    </source>
</evidence>
<evidence type="ECO:0000269" key="3">
    <source>
    </source>
</evidence>
<evidence type="ECO:0000303" key="4">
    <source ref="1"/>
</evidence>
<evidence type="ECO:0000305" key="5"/>
<evidence type="ECO:0007829" key="6">
    <source>
        <dbReference type="PDB" id="6GER"/>
    </source>
</evidence>
<protein>
    <recommendedName>
        <fullName evidence="4">Beta-amylase Tri a 17</fullName>
        <ecNumber evidence="3">3.2.1.2</ecNumber>
    </recommendedName>
    <alternativeName>
        <fullName>1,4-alpha-D-glucan maltohydrolase</fullName>
    </alternativeName>
    <allergenName evidence="5">Tri a 17.0101</allergenName>
</protein>
<accession>P93594</accession>
<keyword id="KW-0002">3D-structure</keyword>
<keyword id="KW-0020">Allergen</keyword>
<keyword id="KW-0119">Carbohydrate metabolism</keyword>
<keyword id="KW-0326">Glycosidase</keyword>
<keyword id="KW-0378">Hydrolase</keyword>
<keyword id="KW-0624">Polysaccharide degradation</keyword>
<keyword id="KW-1185">Reference proteome</keyword>
<gene>
    <name type="primary">BMY1</name>
    <name type="synonym">AMY1</name>
</gene>
<sequence>MAGNMLANYVQVYVMLPLDVVSVDNKFEKGDEIRAQLKKLTEAGVDGVMIDVWWGLVEGKGPKAYDWSAYKQVFDLVHEAGLKLQAIMSFHQCGGNVGDVVNIPIPQWVRDVGATDPDIFYTNRGGTRNIEYLTLGVDDQPLFHGRTAVQMYADYMASFRENMKKFLDAGTIVDIEVGLGPAGEMRYPSYPQSQGWVFPGIGEFICYDKYLEADFKAAAAKAGHPEWELPDDAGEYNDTPEKTQFFKDNGTYLTEKGKFFLSWYSNKLIKHGDKILDEANKVFLGCRVQLAIKISGIHWWYRVPNHAAELTAGYYNLDDRDGYRTIARMLTRHHASMNFTCAEMRDSEQSEEAKSAPEELVQQVLSAGWREGLHVACENALGRYDATAYNTILRNARPKGINKNGPPEHKLFGFTYLRLSNELLEGQNYATFQTFVEKMHANLGHDPSVDPVAPLERSKPEMPIEMILKAAQPKLEPFPFDKNTDLPVKDHTDVGDEVLVAPV</sequence>
<feature type="chain" id="PRO_0000153941" description="Beta-amylase Tri a 17">
    <location>
        <begin position="1"/>
        <end position="503"/>
    </location>
</feature>
<feature type="active site" description="Proton donor" evidence="2">
    <location>
        <position position="184"/>
    </location>
</feature>
<feature type="active site" description="Proton acceptor" evidence="1">
    <location>
        <position position="378"/>
    </location>
</feature>
<feature type="binding site" evidence="1">
    <location>
        <position position="51"/>
    </location>
    <ligand>
        <name>substrate</name>
    </ligand>
</feature>
<feature type="binding site" evidence="1">
    <location>
        <position position="91"/>
    </location>
    <ligand>
        <name>substrate</name>
    </ligand>
</feature>
<feature type="binding site" evidence="1">
    <location>
        <position position="99"/>
    </location>
    <ligand>
        <name>substrate</name>
    </ligand>
</feature>
<feature type="binding site" evidence="1">
    <location>
        <position position="293"/>
    </location>
    <ligand>
        <name>substrate</name>
    </ligand>
</feature>
<feature type="binding site" evidence="1">
    <location>
        <position position="298"/>
    </location>
    <ligand>
        <name>substrate</name>
    </ligand>
</feature>
<feature type="binding site" evidence="1">
    <location>
        <position position="340"/>
    </location>
    <ligand>
        <name>substrate</name>
    </ligand>
</feature>
<feature type="binding site" evidence="1">
    <location>
        <begin position="379"/>
        <end position="380"/>
    </location>
    <ligand>
        <name>substrate</name>
    </ligand>
</feature>
<feature type="binding site" evidence="1">
    <location>
        <position position="418"/>
    </location>
    <ligand>
        <name>substrate</name>
    </ligand>
</feature>
<feature type="helix" evidence="6">
    <location>
        <begin position="6"/>
        <end position="8"/>
    </location>
</feature>
<feature type="strand" evidence="6">
    <location>
        <begin position="11"/>
        <end position="15"/>
    </location>
</feature>
<feature type="helix" evidence="6">
    <location>
        <begin position="30"/>
        <end position="42"/>
    </location>
</feature>
<feature type="strand" evidence="6">
    <location>
        <begin position="47"/>
        <end position="53"/>
    </location>
</feature>
<feature type="helix" evidence="6">
    <location>
        <begin position="54"/>
        <end position="57"/>
    </location>
</feature>
<feature type="helix" evidence="6">
    <location>
        <begin position="68"/>
        <end position="79"/>
    </location>
</feature>
<feature type="strand" evidence="6">
    <location>
        <begin position="83"/>
        <end position="89"/>
    </location>
</feature>
<feature type="helix" evidence="6">
    <location>
        <begin position="107"/>
        <end position="110"/>
    </location>
</feature>
<feature type="helix" evidence="6">
    <location>
        <begin position="111"/>
        <end position="114"/>
    </location>
</feature>
<feature type="helix" evidence="6">
    <location>
        <begin position="117"/>
        <end position="119"/>
    </location>
</feature>
<feature type="strand" evidence="6">
    <location>
        <begin position="120"/>
        <end position="122"/>
    </location>
</feature>
<feature type="strand" evidence="6">
    <location>
        <begin position="128"/>
        <end position="133"/>
    </location>
</feature>
<feature type="helix" evidence="6">
    <location>
        <begin position="135"/>
        <end position="137"/>
    </location>
</feature>
<feature type="helix" evidence="6">
    <location>
        <begin position="148"/>
        <end position="162"/>
    </location>
</feature>
<feature type="helix" evidence="6">
    <location>
        <begin position="164"/>
        <end position="168"/>
    </location>
</feature>
<feature type="strand" evidence="6">
    <location>
        <begin position="172"/>
        <end position="177"/>
    </location>
</feature>
<feature type="helix" evidence="6">
    <location>
        <begin position="181"/>
        <end position="183"/>
    </location>
</feature>
<feature type="helix" evidence="6">
    <location>
        <begin position="192"/>
        <end position="194"/>
    </location>
</feature>
<feature type="helix" evidence="6">
    <location>
        <begin position="209"/>
        <end position="221"/>
    </location>
</feature>
<feature type="helix" evidence="6">
    <location>
        <begin position="240"/>
        <end position="242"/>
    </location>
</feature>
<feature type="turn" evidence="6">
    <location>
        <begin position="244"/>
        <end position="246"/>
    </location>
</feature>
<feature type="helix" evidence="6">
    <location>
        <begin position="251"/>
        <end position="253"/>
    </location>
</feature>
<feature type="helix" evidence="6">
    <location>
        <begin position="255"/>
        <end position="282"/>
    </location>
</feature>
<feature type="turn" evidence="6">
    <location>
        <begin position="283"/>
        <end position="285"/>
    </location>
</feature>
<feature type="strand" evidence="6">
    <location>
        <begin position="289"/>
        <end position="293"/>
    </location>
</feature>
<feature type="turn" evidence="6">
    <location>
        <begin position="299"/>
        <end position="302"/>
    </location>
</feature>
<feature type="helix" evidence="6">
    <location>
        <begin position="307"/>
        <end position="312"/>
    </location>
</feature>
<feature type="helix" evidence="6">
    <location>
        <begin position="324"/>
        <end position="331"/>
    </location>
</feature>
<feature type="turn" evidence="6">
    <location>
        <begin position="332"/>
        <end position="334"/>
    </location>
</feature>
<feature type="strand" evidence="6">
    <location>
        <begin position="336"/>
        <end position="339"/>
    </location>
</feature>
<feature type="helix" evidence="6">
    <location>
        <begin position="346"/>
        <end position="348"/>
    </location>
</feature>
<feature type="helix" evidence="6">
    <location>
        <begin position="351"/>
        <end position="353"/>
    </location>
</feature>
<feature type="helix" evidence="6">
    <location>
        <begin position="357"/>
        <end position="370"/>
    </location>
</feature>
<feature type="strand" evidence="6">
    <location>
        <begin position="375"/>
        <end position="378"/>
    </location>
</feature>
<feature type="helix" evidence="6">
    <location>
        <begin position="386"/>
        <end position="396"/>
    </location>
</feature>
<feature type="strand" evidence="6">
    <location>
        <begin position="412"/>
        <end position="417"/>
    </location>
</feature>
<feature type="helix" evidence="6">
    <location>
        <begin position="421"/>
        <end position="424"/>
    </location>
</feature>
<feature type="helix" evidence="6">
    <location>
        <begin position="426"/>
        <end position="439"/>
    </location>
</feature>
<feature type="turn" evidence="6">
    <location>
        <begin position="440"/>
        <end position="442"/>
    </location>
</feature>
<feature type="helix" evidence="6">
    <location>
        <begin position="464"/>
        <end position="469"/>
    </location>
</feature>
<organism>
    <name type="scientific">Triticum aestivum</name>
    <name type="common">Wheat</name>
    <dbReference type="NCBI Taxonomy" id="4565"/>
    <lineage>
        <taxon>Eukaryota</taxon>
        <taxon>Viridiplantae</taxon>
        <taxon>Streptophyta</taxon>
        <taxon>Embryophyta</taxon>
        <taxon>Tracheophyta</taxon>
        <taxon>Spermatophyta</taxon>
        <taxon>Magnoliopsida</taxon>
        <taxon>Liliopsida</taxon>
        <taxon>Poales</taxon>
        <taxon>Poaceae</taxon>
        <taxon>BOP clade</taxon>
        <taxon>Pooideae</taxon>
        <taxon>Triticodae</taxon>
        <taxon>Triticeae</taxon>
        <taxon>Triticinae</taxon>
        <taxon>Triticum</taxon>
    </lineage>
</organism>
<dbReference type="EC" id="3.2.1.2" evidence="3"/>
<dbReference type="EMBL" id="X98504">
    <property type="protein sequence ID" value="CAA67128.1"/>
    <property type="molecule type" value="mRNA"/>
</dbReference>
<dbReference type="PDB" id="6GER">
    <property type="method" value="X-ray"/>
    <property type="resolution" value="2.00 A"/>
    <property type="chains" value="A=1-503"/>
</dbReference>
<dbReference type="PDBsum" id="6GER"/>
<dbReference type="SMR" id="P93594"/>
<dbReference type="STRING" id="4565.P93594"/>
<dbReference type="Allergome" id="12172">
    <property type="allergen name" value="Tri a 17.0101"/>
</dbReference>
<dbReference type="Allergome" id="9594">
    <property type="allergen name" value="Tri a 17"/>
</dbReference>
<dbReference type="CAZy" id="GH14">
    <property type="family name" value="Glycoside Hydrolase Family 14"/>
</dbReference>
<dbReference type="PaxDb" id="4565-Traes_2DS_D14ABD1DB.1"/>
<dbReference type="EnsemblPlants" id="TraesARI2D03G01172000.1">
    <property type="protein sequence ID" value="TraesARI2D03G01172000.1"/>
    <property type="gene ID" value="TraesARI2D03G01172000"/>
</dbReference>
<dbReference type="EnsemblPlants" id="TraesCS2D02G220900.3">
    <property type="protein sequence ID" value="TraesCS2D02G220900.3"/>
    <property type="gene ID" value="TraesCS2D02G220900"/>
</dbReference>
<dbReference type="EnsemblPlants" id="TraesCS2D03G0467600.2">
    <property type="protein sequence ID" value="TraesCS2D03G0467600.2.CDS"/>
    <property type="gene ID" value="TraesCS2D03G0467600"/>
</dbReference>
<dbReference type="EnsemblPlants" id="TraesJAG2D03G01162560.1">
    <property type="protein sequence ID" value="TraesJAG2D03G01162560.1"/>
    <property type="gene ID" value="TraesJAG2D03G01162560"/>
</dbReference>
<dbReference type="EnsemblPlants" id="TraesKAR2D01G0140510.1">
    <property type="protein sequence ID" value="cds.TraesKAR2D01G0140510.1"/>
    <property type="gene ID" value="TraesKAR2D01G0140510"/>
</dbReference>
<dbReference type="EnsemblPlants" id="TraesLAC2D03G01107570.1">
    <property type="protein sequence ID" value="TraesLAC2D03G01107570.1"/>
    <property type="gene ID" value="TraesLAC2D03G01107570"/>
</dbReference>
<dbReference type="EnsemblPlants" id="TraesLDM2D03G01156690.1">
    <property type="protein sequence ID" value="TraesLDM2D03G01156690.1"/>
    <property type="gene ID" value="TraesLDM2D03G01156690"/>
</dbReference>
<dbReference type="EnsemblPlants" id="TraesMAC2D03G01154300.1">
    <property type="protein sequence ID" value="TraesMAC2D03G01154300.1"/>
    <property type="gene ID" value="TraesMAC2D03G01154300"/>
</dbReference>
<dbReference type="EnsemblPlants" id="TraesNOR2D03G01172180.1">
    <property type="protein sequence ID" value="TraesNOR2D03G01172180.1"/>
    <property type="gene ID" value="TraesNOR2D03G01172180"/>
</dbReference>
<dbReference type="EnsemblPlants" id="TraesSTA2D03G01144890.1">
    <property type="protein sequence ID" value="TraesSTA2D03G01144890.1"/>
    <property type="gene ID" value="TraesSTA2D03G01144890"/>
</dbReference>
<dbReference type="EnsemblPlants" id="TraesSYM2D03G01170650.1">
    <property type="protein sequence ID" value="TraesSYM2D03G01170650.1"/>
    <property type="gene ID" value="TraesSYM2D03G01170650"/>
</dbReference>
<dbReference type="Gramene" id="TraesARI2D03G01172000.1">
    <property type="protein sequence ID" value="TraesARI2D03G01172000.1"/>
    <property type="gene ID" value="TraesARI2D03G01172000"/>
</dbReference>
<dbReference type="Gramene" id="TraesCS2D02G220900.3">
    <property type="protein sequence ID" value="TraesCS2D02G220900.3"/>
    <property type="gene ID" value="TraesCS2D02G220900"/>
</dbReference>
<dbReference type="Gramene" id="TraesCS2D03G0467600.2">
    <property type="protein sequence ID" value="TraesCS2D03G0467600.2.CDS"/>
    <property type="gene ID" value="TraesCS2D03G0467600"/>
</dbReference>
<dbReference type="Gramene" id="TraesJAG2D03G01162560.1">
    <property type="protein sequence ID" value="TraesJAG2D03G01162560.1"/>
    <property type="gene ID" value="TraesJAG2D03G01162560"/>
</dbReference>
<dbReference type="Gramene" id="TraesKAR2D01G0140510.1">
    <property type="protein sequence ID" value="cds.TraesKAR2D01G0140510.1"/>
    <property type="gene ID" value="TraesKAR2D01G0140510"/>
</dbReference>
<dbReference type="Gramene" id="TraesLAC2D03G01107570.1">
    <property type="protein sequence ID" value="TraesLAC2D03G01107570.1"/>
    <property type="gene ID" value="TraesLAC2D03G01107570"/>
</dbReference>
<dbReference type="Gramene" id="TraesLDM2D03G01156690.1">
    <property type="protein sequence ID" value="TraesLDM2D03G01156690.1"/>
    <property type="gene ID" value="TraesLDM2D03G01156690"/>
</dbReference>
<dbReference type="Gramene" id="TraesMAC2D03G01154300.1">
    <property type="protein sequence ID" value="TraesMAC2D03G01154300.1"/>
    <property type="gene ID" value="TraesMAC2D03G01154300"/>
</dbReference>
<dbReference type="Gramene" id="TraesNOR2D03G01172180.1">
    <property type="protein sequence ID" value="TraesNOR2D03G01172180.1"/>
    <property type="gene ID" value="TraesNOR2D03G01172180"/>
</dbReference>
<dbReference type="Gramene" id="TraesSTA2D03G01144890.1">
    <property type="protein sequence ID" value="TraesSTA2D03G01144890.1"/>
    <property type="gene ID" value="TraesSTA2D03G01144890"/>
</dbReference>
<dbReference type="Gramene" id="TraesSYM2D03G01170650.1">
    <property type="protein sequence ID" value="TraesSYM2D03G01170650.1"/>
    <property type="gene ID" value="TraesSYM2D03G01170650"/>
</dbReference>
<dbReference type="eggNOG" id="ENOG502QUU5">
    <property type="taxonomic scope" value="Eukaryota"/>
</dbReference>
<dbReference type="OMA" id="KECGMKM"/>
<dbReference type="Proteomes" id="UP000019116">
    <property type="component" value="Chromosome 2D"/>
</dbReference>
<dbReference type="ExpressionAtlas" id="P93594">
    <property type="expression patterns" value="baseline and differential"/>
</dbReference>
<dbReference type="GO" id="GO:0016161">
    <property type="term" value="F:beta-amylase activity"/>
    <property type="evidence" value="ECO:0007669"/>
    <property type="project" value="UniProtKB-EC"/>
</dbReference>
<dbReference type="GO" id="GO:0000272">
    <property type="term" value="P:polysaccharide catabolic process"/>
    <property type="evidence" value="ECO:0007669"/>
    <property type="project" value="UniProtKB-KW"/>
</dbReference>
<dbReference type="FunFam" id="3.20.20.80:FF:000066">
    <property type="entry name" value="Beta-amylase"/>
    <property type="match status" value="1"/>
</dbReference>
<dbReference type="Gene3D" id="3.20.20.80">
    <property type="entry name" value="Glycosidases"/>
    <property type="match status" value="1"/>
</dbReference>
<dbReference type="InterPro" id="IPR001554">
    <property type="entry name" value="Glyco_hydro_14"/>
</dbReference>
<dbReference type="InterPro" id="IPR018238">
    <property type="entry name" value="Glyco_hydro_14_CS"/>
</dbReference>
<dbReference type="InterPro" id="IPR001371">
    <property type="entry name" value="Glyco_hydro_14B_pln"/>
</dbReference>
<dbReference type="InterPro" id="IPR017853">
    <property type="entry name" value="Glycoside_hydrolase_SF"/>
</dbReference>
<dbReference type="PANTHER" id="PTHR31352:SF60">
    <property type="entry name" value="BETA-AMYLASE"/>
    <property type="match status" value="1"/>
</dbReference>
<dbReference type="PANTHER" id="PTHR31352">
    <property type="entry name" value="BETA-AMYLASE 1, CHLOROPLASTIC"/>
    <property type="match status" value="1"/>
</dbReference>
<dbReference type="Pfam" id="PF01373">
    <property type="entry name" value="Glyco_hydro_14"/>
    <property type="match status" value="1"/>
</dbReference>
<dbReference type="PRINTS" id="PR00750">
    <property type="entry name" value="BETAAMYLASE"/>
</dbReference>
<dbReference type="PRINTS" id="PR00842">
    <property type="entry name" value="GLHYDLASE14B"/>
</dbReference>
<dbReference type="SUPFAM" id="SSF51445">
    <property type="entry name" value="(Trans)glycosidases"/>
    <property type="match status" value="1"/>
</dbReference>
<dbReference type="PROSITE" id="PS00506">
    <property type="entry name" value="BETA_AMYLASE_1"/>
    <property type="match status" value="1"/>
</dbReference>
<dbReference type="PROSITE" id="PS00679">
    <property type="entry name" value="BETA_AMYLASE_2"/>
    <property type="match status" value="1"/>
</dbReference>
<comment type="catalytic activity">
    <reaction evidence="3">
        <text>Hydrolysis of (1-&gt;4)-alpha-D-glucosidic linkages in polysaccharides so as to remove successive maltose units from the non-reducing ends of the chains.</text>
        <dbReference type="EC" id="3.2.1.2"/>
    </reaction>
</comment>
<comment type="biophysicochemical properties">
    <phDependence>
        <text evidence="3">Optimum pH is 5. Highly active at acidic pH range 4-7. Retains over 80% of maximum activity at 4.0. At higher pH values the activity decreases markedly, with more than 50% of activity lost at pH 8.0.</text>
    </phDependence>
</comment>
<comment type="allergen">
    <text evidence="3">Causes an allergic reaction in human. Recombinant protein binds to IgE in 41% of the 17 European wheat food-allergic patients tested. Six of these patients have a history of wheat-induced anaphylaxis. Estimation by logistic regression indicates a 24-fold higher probability of the relative risk of beta-amylase-reactive patients to develop a wheat-induced anaphylaxis. Induces degranulation of the humanized rat basophilic leukemia (RBL) cells and releases hexosaminidase from them.</text>
</comment>
<comment type="similarity">
    <text evidence="5">Belongs to the glycosyl hydrolase 14 family.</text>
</comment>
<name>AMYB_WHEAT</name>
<reference key="1">
    <citation type="online journal article" date="1996" name="Plant Gene Register">
        <title>Nucleotide sequence of a cDNA from wheat leaves encoding ubiquitous beta-amylase.</title>
        <authorList>
            <person name="Wagner G.B."/>
            <person name="Haeger K.-P."/>
            <person name="Ziegler P."/>
        </authorList>
        <locator>PGR96-123</locator>
    </citation>
    <scope>NUCLEOTIDE SEQUENCE [MRNA]</scope>
    <source>
        <strain>cv. Star</strain>
        <tissue>Leaf</tissue>
    </source>
</reference>
<reference key="2">
    <citation type="journal article" date="2019" name="Allergy">
        <title>Three-dimensional structure of the wheat beta-amylase Tri a 17, a clinically relevant food allergen.</title>
        <authorList>
            <person name="Hofer G."/>
            <person name="Wieser S."/>
            <person name="Bogdos M.K."/>
            <person name="Gattinger P."/>
            <person name="Nakamura R."/>
            <person name="Ebisawa M."/>
            <person name="Maekelae M."/>
            <person name="Papadopoulos N."/>
            <person name="Valenta R."/>
            <person name="Keller W."/>
        </authorList>
    </citation>
    <scope>X-RAY CRYSTALLOGRAPHY (2.0 ANGSTROMS)</scope>
    <scope>CATALYTIC ACTIVITY</scope>
    <scope>BIOPHYSICOCHEMICAL PROPERTIES</scope>
    <scope>ALLERGEN</scope>
    <scope>CIRCULAR DICHROISM ANALYSIS</scope>
</reference>